<feature type="chain" id="PRO_0000398637" description="Cyclin-F">
    <location>
        <begin position="1"/>
        <end position="761"/>
    </location>
</feature>
<feature type="domain" description="F-box" evidence="3">
    <location>
        <begin position="28"/>
        <end position="75"/>
    </location>
</feature>
<feature type="domain" description="Cyclin N-terminal" evidence="2">
    <location>
        <begin position="300"/>
        <end position="411"/>
    </location>
</feature>
<feature type="region of interest" description="Disordered" evidence="4">
    <location>
        <begin position="575"/>
        <end position="594"/>
    </location>
</feature>
<feature type="region of interest" description="PEST">
    <location>
        <begin position="589"/>
        <end position="745"/>
    </location>
</feature>
<feature type="region of interest" description="Disordered" evidence="4">
    <location>
        <begin position="677"/>
        <end position="761"/>
    </location>
</feature>
<feature type="short sequence motif" description="Nuclear localization signal 1" evidence="1">
    <location>
        <begin position="19"/>
        <end position="27"/>
    </location>
</feature>
<feature type="short sequence motif" description="D box 1" evidence="1">
    <location>
        <begin position="316"/>
        <end position="319"/>
    </location>
</feature>
<feature type="short sequence motif" description="D box 2" evidence="1">
    <location>
        <begin position="355"/>
        <end position="358"/>
    </location>
</feature>
<feature type="compositionally biased region" description="Basic and acidic residues" evidence="4">
    <location>
        <begin position="580"/>
        <end position="590"/>
    </location>
</feature>
<feature type="compositionally biased region" description="Low complexity" evidence="4">
    <location>
        <begin position="691"/>
        <end position="718"/>
    </location>
</feature>
<feature type="compositionally biased region" description="Basic residues" evidence="4">
    <location>
        <begin position="739"/>
        <end position="749"/>
    </location>
</feature>
<evidence type="ECO:0000250" key="1">
    <source>
        <dbReference type="UniProtKB" id="P41002"/>
    </source>
</evidence>
<evidence type="ECO:0000255" key="2"/>
<evidence type="ECO:0000255" key="3">
    <source>
        <dbReference type="PROSITE-ProRule" id="PRU00080"/>
    </source>
</evidence>
<evidence type="ECO:0000256" key="4">
    <source>
        <dbReference type="SAM" id="MobiDB-lite"/>
    </source>
</evidence>
<evidence type="ECO:0000305" key="5"/>
<name>CCNF_XENLA</name>
<sequence length="761" mass="84500">MKGGGLHCRCSKCFAAPPRRRIKRRPRVLTLLSLPEDVLLYVLECLPAVDILSMREVHPHLRSLVDSHSSVWARASFQDVWPSSENLNLFERAAECGNFEACVKLGIAYLYNEGLSVSDDGRAEVNGLKASRFFSLTERLNAGADPFVWLFIRPPWSSSGSCCKAVVFDSLNEECGTVTSGEGATGALKGSIQYCLAKVLSLFEDDDKKREALGMLESSASNGCLHSAYLLWETKQKAALSDPGRYLQSFRQLRDYAARGCWDAQISLAKACGHKNPLNQEQRSAGELVNQVFQSSLPINKSSIFTTQKGMNDTMRYILIDWLVEVATMKDFSSLCLHMTVGLVDRYLKLRSVPRAKLQLVGIACMVICTRFISKEILTIREAVWLTDNTYKYEDLVRMMGEIISALEGKIRMPTVVDYKDVLSHLIPLDRNTLHLCSYISELSLLYTELSMYSPAQLAAGALLLARILHRQARPWPAQLAETTGFTLEHLTPCVVLLHKKCFHDDAPRDYRQVSLTAVKQRFQDDLYDQISKEKVMDHTHLCELLGVPCHDSESPATCPNAADFHQFLCSPSGNKTKRRREESIQEDRGSFVTTPTAELSNQEEDLLGDFLDWSLETSCSGYEGDRESEGEREGEVTAPSGVLDLSLLLTEHPQCQDSTTDDDSITLHPIPLLSKAENGTDSIEGCVEKSSGYSSVSSGGSPTSSSSPGLPFTPTPGLNHSKLTPIPFPQPCSPLLKASRRQVKRKNQAQHSEDNLSDEL</sequence>
<keyword id="KW-0131">Cell cycle</keyword>
<keyword id="KW-0132">Cell division</keyword>
<keyword id="KW-0195">Cyclin</keyword>
<keyword id="KW-0963">Cytoplasm</keyword>
<keyword id="KW-0206">Cytoskeleton</keyword>
<keyword id="KW-0498">Mitosis</keyword>
<keyword id="KW-0539">Nucleus</keyword>
<keyword id="KW-1185">Reference proteome</keyword>
<keyword id="KW-0833">Ubl conjugation pathway</keyword>
<reference key="1">
    <citation type="submission" date="2003-08" db="EMBL/GenBank/DDBJ databases">
        <authorList>
            <consortium name="NIH - Xenopus Gene Collection (XGC) project"/>
        </authorList>
    </citation>
    <scope>NUCLEOTIDE SEQUENCE [LARGE SCALE MRNA]</scope>
    <source>
        <tissue>Ovary</tissue>
    </source>
</reference>
<proteinExistence type="evidence at transcript level"/>
<comment type="function">
    <text evidence="1">Substrate recognition component of the SCF(CCNF) E3 ubiquitin-protein ligase complex which mediates the ubiquitination and subsequent proteasomal degradation of target proteins (By similarity). The SCF(CCNF) E3 ubiquitin-protein ligase complex is an integral component of the ubiquitin proteasome system (UPS) and links proteasome degradation to the cell cycle (By similarity). Mediates the substrate recognition and the proteasomal degradation of various target proteins during G2 phase involved in the regulation of cell cycle progression and in the maintenance of genome stability (By similarity).</text>
</comment>
<comment type="subunit">
    <text evidence="1">Component of the SCF(CCNF) complex.</text>
</comment>
<comment type="subcellular location">
    <subcellularLocation>
        <location evidence="1">Nucleus</location>
    </subcellularLocation>
    <subcellularLocation>
        <location evidence="1">Cytoplasm</location>
        <location evidence="1">Perinuclear region</location>
    </subcellularLocation>
    <subcellularLocation>
        <location evidence="1">Cytoplasm</location>
        <location evidence="1">Cytoskeleton</location>
        <location evidence="1">Microtubule organizing center</location>
        <location evidence="1">Centrosome</location>
        <location evidence="1">Centriole</location>
    </subcellularLocation>
    <text evidence="1">Localization in the centrosome is rare in S phase cells and increases in G2 cells, Localizes on both the mother and daughter centrioles. Localizes to the nucleus in G2 phase.</text>
</comment>
<comment type="domain">
    <text evidence="1">The nuclear localization signals mediate the localization to the nucleus.</text>
</comment>
<comment type="domain">
    <text evidence="1">The D box motifs (amino acid sequence RxxL) are involved in substrate binding, and may be ubiquitinated.</text>
</comment>
<comment type="similarity">
    <text evidence="5">Belongs to the cyclin family. Cyclin AB subfamily.</text>
</comment>
<protein>
    <recommendedName>
        <fullName>Cyclin-F</fullName>
    </recommendedName>
</protein>
<gene>
    <name type="primary">ccnf</name>
</gene>
<accession>Q7T0L6</accession>
<organism>
    <name type="scientific">Xenopus laevis</name>
    <name type="common">African clawed frog</name>
    <dbReference type="NCBI Taxonomy" id="8355"/>
    <lineage>
        <taxon>Eukaryota</taxon>
        <taxon>Metazoa</taxon>
        <taxon>Chordata</taxon>
        <taxon>Craniata</taxon>
        <taxon>Vertebrata</taxon>
        <taxon>Euteleostomi</taxon>
        <taxon>Amphibia</taxon>
        <taxon>Batrachia</taxon>
        <taxon>Anura</taxon>
        <taxon>Pipoidea</taxon>
        <taxon>Pipidae</taxon>
        <taxon>Xenopodinae</taxon>
        <taxon>Xenopus</taxon>
        <taxon>Xenopus</taxon>
    </lineage>
</organism>
<dbReference type="EMBL" id="BC056134">
    <property type="protein sequence ID" value="AAH56134.1"/>
    <property type="molecule type" value="mRNA"/>
</dbReference>
<dbReference type="RefSeq" id="NP_001079901.1">
    <property type="nucleotide sequence ID" value="NM_001086432.1"/>
</dbReference>
<dbReference type="SMR" id="Q7T0L6"/>
<dbReference type="DNASU" id="379591"/>
<dbReference type="GeneID" id="379591"/>
<dbReference type="KEGG" id="xla:379591"/>
<dbReference type="AGR" id="Xenbase:XB-GENE-963734"/>
<dbReference type="CTD" id="379591"/>
<dbReference type="Xenbase" id="XB-GENE-963734">
    <property type="gene designation" value="ccnf.L"/>
</dbReference>
<dbReference type="OrthoDB" id="5590282at2759"/>
<dbReference type="Proteomes" id="UP000186698">
    <property type="component" value="Chromosome 9_10L"/>
</dbReference>
<dbReference type="Bgee" id="379591">
    <property type="expression patterns" value="Expressed in oocyte and 19 other cell types or tissues"/>
</dbReference>
<dbReference type="GO" id="GO:0005814">
    <property type="term" value="C:centriole"/>
    <property type="evidence" value="ECO:0000250"/>
    <property type="project" value="UniProtKB"/>
</dbReference>
<dbReference type="GO" id="GO:0000307">
    <property type="term" value="C:cyclin-dependent protein kinase holoenzyme complex"/>
    <property type="evidence" value="ECO:0000318"/>
    <property type="project" value="GO_Central"/>
</dbReference>
<dbReference type="GO" id="GO:0005737">
    <property type="term" value="C:cytoplasm"/>
    <property type="evidence" value="ECO:0000318"/>
    <property type="project" value="GO_Central"/>
</dbReference>
<dbReference type="GO" id="GO:0005815">
    <property type="term" value="C:microtubule organizing center"/>
    <property type="evidence" value="ECO:0000318"/>
    <property type="project" value="GO_Central"/>
</dbReference>
<dbReference type="GO" id="GO:0005634">
    <property type="term" value="C:nucleus"/>
    <property type="evidence" value="ECO:0000250"/>
    <property type="project" value="UniProtKB"/>
</dbReference>
<dbReference type="GO" id="GO:0048471">
    <property type="term" value="C:perinuclear region of cytoplasm"/>
    <property type="evidence" value="ECO:0007669"/>
    <property type="project" value="UniProtKB-SubCell"/>
</dbReference>
<dbReference type="GO" id="GO:0019005">
    <property type="term" value="C:SCF ubiquitin ligase complex"/>
    <property type="evidence" value="ECO:0000250"/>
    <property type="project" value="UniProtKB"/>
</dbReference>
<dbReference type="GO" id="GO:0016538">
    <property type="term" value="F:cyclin-dependent protein serine/threonine kinase regulator activity"/>
    <property type="evidence" value="ECO:0000318"/>
    <property type="project" value="GO_Central"/>
</dbReference>
<dbReference type="GO" id="GO:0051301">
    <property type="term" value="P:cell division"/>
    <property type="evidence" value="ECO:0007669"/>
    <property type="project" value="UniProtKB-KW"/>
</dbReference>
<dbReference type="GO" id="GO:0000082">
    <property type="term" value="P:G1/S transition of mitotic cell cycle"/>
    <property type="evidence" value="ECO:0000318"/>
    <property type="project" value="GO_Central"/>
</dbReference>
<dbReference type="GO" id="GO:0010826">
    <property type="term" value="P:negative regulation of centrosome duplication"/>
    <property type="evidence" value="ECO:0000250"/>
    <property type="project" value="UniProtKB"/>
</dbReference>
<dbReference type="GO" id="GO:0016567">
    <property type="term" value="P:protein ubiquitination"/>
    <property type="evidence" value="ECO:0000250"/>
    <property type="project" value="UniProtKB"/>
</dbReference>
<dbReference type="GO" id="GO:0031146">
    <property type="term" value="P:SCF-dependent proteasomal ubiquitin-dependent protein catabolic process"/>
    <property type="evidence" value="ECO:0000250"/>
    <property type="project" value="UniProtKB"/>
</dbReference>
<dbReference type="CDD" id="cd20521">
    <property type="entry name" value="CYCLIN_CCNF_rpt1"/>
    <property type="match status" value="1"/>
</dbReference>
<dbReference type="CDD" id="cd20522">
    <property type="entry name" value="CYCLIN_CCNF_rpt2"/>
    <property type="match status" value="1"/>
</dbReference>
<dbReference type="CDD" id="cd22082">
    <property type="entry name" value="F-box_FBXO1"/>
    <property type="match status" value="1"/>
</dbReference>
<dbReference type="FunFam" id="1.10.472.10:FF:000038">
    <property type="entry name" value="Cyclin F"/>
    <property type="match status" value="1"/>
</dbReference>
<dbReference type="FunFam" id="1.10.472.10:FF:000055">
    <property type="entry name" value="Cyclin F"/>
    <property type="match status" value="1"/>
</dbReference>
<dbReference type="Gene3D" id="1.10.472.10">
    <property type="entry name" value="Cyclin-like"/>
    <property type="match status" value="2"/>
</dbReference>
<dbReference type="InterPro" id="IPR039361">
    <property type="entry name" value="Cyclin"/>
</dbReference>
<dbReference type="InterPro" id="IPR013763">
    <property type="entry name" value="Cyclin-like_dom"/>
</dbReference>
<dbReference type="InterPro" id="IPR036915">
    <property type="entry name" value="Cyclin-like_sf"/>
</dbReference>
<dbReference type="InterPro" id="IPR004367">
    <property type="entry name" value="Cyclin_C-dom"/>
</dbReference>
<dbReference type="InterPro" id="IPR006671">
    <property type="entry name" value="Cyclin_N"/>
</dbReference>
<dbReference type="InterPro" id="IPR048258">
    <property type="entry name" value="Cyclins_cyclin-box"/>
</dbReference>
<dbReference type="InterPro" id="IPR036047">
    <property type="entry name" value="F-box-like_dom_sf"/>
</dbReference>
<dbReference type="InterPro" id="IPR001810">
    <property type="entry name" value="F-box_dom"/>
</dbReference>
<dbReference type="PANTHER" id="PTHR10177">
    <property type="entry name" value="CYCLINS"/>
    <property type="match status" value="1"/>
</dbReference>
<dbReference type="Pfam" id="PF02984">
    <property type="entry name" value="Cyclin_C"/>
    <property type="match status" value="1"/>
</dbReference>
<dbReference type="Pfam" id="PF00134">
    <property type="entry name" value="Cyclin_N"/>
    <property type="match status" value="1"/>
</dbReference>
<dbReference type="Pfam" id="PF00646">
    <property type="entry name" value="F-box"/>
    <property type="match status" value="1"/>
</dbReference>
<dbReference type="SMART" id="SM00385">
    <property type="entry name" value="CYCLIN"/>
    <property type="match status" value="2"/>
</dbReference>
<dbReference type="SMART" id="SM01332">
    <property type="entry name" value="Cyclin_C"/>
    <property type="match status" value="1"/>
</dbReference>
<dbReference type="SMART" id="SM00256">
    <property type="entry name" value="FBOX"/>
    <property type="match status" value="1"/>
</dbReference>
<dbReference type="SUPFAM" id="SSF47954">
    <property type="entry name" value="Cyclin-like"/>
    <property type="match status" value="2"/>
</dbReference>
<dbReference type="SUPFAM" id="SSF81383">
    <property type="entry name" value="F-box domain"/>
    <property type="match status" value="1"/>
</dbReference>
<dbReference type="PROSITE" id="PS00292">
    <property type="entry name" value="CYCLINS"/>
    <property type="match status" value="1"/>
</dbReference>
<dbReference type="PROSITE" id="PS50181">
    <property type="entry name" value="FBOX"/>
    <property type="match status" value="1"/>
</dbReference>